<name>MDM10_YEAST</name>
<gene>
    <name evidence="1" type="primary">MDM10</name>
    <name type="ordered locus">YAL010C</name>
    <name type="ORF">FUN37</name>
</gene>
<sequence>MLPYMDQVLRAFYQSTHWSTQNSYEDITATSRTLLDFRIPSAIHLQISNKSTPNTFNSLDFSTRSRINGSLSYLYSDAQQLEKFMRNSTDIPLQDATETYRQLQPNLNFSVSSANTLSSDNTTVDNDKKLLHDSKFVKKSLYYGRMYYPSSDLEAMIIKRLSPQTQFMLKGVSSFKESLNVLTCYFQRDSHRNLQEWIFSTSDLLCGYRVLHNFLTTPSKFNTSLYNNSSLSLGAEFWLGLVSLSPGCSTTLRYYTHSTNTGRPLTLTLSWNPLFGHISSTYSAKTGTNSTFCAKYDFNLYSIESNLSFGCEFWQKKHHLLETNKNNNDKLEPISDELVDINPNSRATKLLHENVPDLNSAVNDIPSTLDIPVHKQKLLNDLTYAFSSSLRKIDEERSTIEKFDNKINSSIFTSVWKLSTSLRDKTLKLLWEGKWRGFLISAGTELVFTRGFQESLSDDEKNDNAISISATDTENGNIPVFPAKFGIQFQYST</sequence>
<evidence type="ECO:0000255" key="1">
    <source>
        <dbReference type="HAMAP-Rule" id="MF_03102"/>
    </source>
</evidence>
<evidence type="ECO:0000269" key="2">
    <source>
    </source>
</evidence>
<evidence type="ECO:0000269" key="3">
    <source>
    </source>
</evidence>
<evidence type="ECO:0000269" key="4">
    <source>
    </source>
</evidence>
<evidence type="ECO:0000269" key="5">
    <source>
    </source>
</evidence>
<evidence type="ECO:0000269" key="6">
    <source>
    </source>
</evidence>
<evidence type="ECO:0000269" key="7">
    <source>
    </source>
</evidence>
<evidence type="ECO:0000269" key="8">
    <source>
    </source>
</evidence>
<evidence type="ECO:0000269" key="9">
    <source>
    </source>
</evidence>
<evidence type="ECO:0000269" key="10">
    <source>
    </source>
</evidence>
<evidence type="ECO:0000269" key="11">
    <source>
    </source>
</evidence>
<evidence type="ECO:0000269" key="12">
    <source>
    </source>
</evidence>
<evidence type="ECO:0000305" key="13"/>
<dbReference type="EMBL" id="X80874">
    <property type="protein sequence ID" value="CAA56842.1"/>
    <property type="molecule type" value="Genomic_DNA"/>
</dbReference>
<dbReference type="EMBL" id="L22015">
    <property type="protein sequence ID" value="AAC04948.1"/>
    <property type="molecule type" value="Genomic_DNA"/>
</dbReference>
<dbReference type="EMBL" id="M36073">
    <property type="protein sequence ID" value="AAA35072.2"/>
    <property type="molecule type" value="Genomic_DNA"/>
</dbReference>
<dbReference type="EMBL" id="L05146">
    <property type="protein sequence ID" value="AAC04947.1"/>
    <property type="molecule type" value="Genomic_DNA"/>
</dbReference>
<dbReference type="EMBL" id="BK006935">
    <property type="protein sequence ID" value="DAA06978.2"/>
    <property type="molecule type" value="Genomic_DNA"/>
</dbReference>
<dbReference type="PIR" id="PS0157">
    <property type="entry name" value="PS0157"/>
</dbReference>
<dbReference type="RefSeq" id="NP_009392.2">
    <property type="nucleotide sequence ID" value="NM_001178155.2"/>
</dbReference>
<dbReference type="SMR" id="P18409"/>
<dbReference type="BioGRID" id="31756">
    <property type="interactions" value="396"/>
</dbReference>
<dbReference type="ComplexPortal" id="CPX-3196">
    <property type="entry name" value="ERMES complex"/>
</dbReference>
<dbReference type="DIP" id="DIP-6697N"/>
<dbReference type="FunCoup" id="P18409">
    <property type="interactions" value="100"/>
</dbReference>
<dbReference type="IntAct" id="P18409">
    <property type="interactions" value="48"/>
</dbReference>
<dbReference type="MINT" id="P18409"/>
<dbReference type="STRING" id="4932.YAL010C"/>
<dbReference type="TCDB" id="1.B.33.3.1">
    <property type="family name" value="the outer membrane protein insertion porin (bam complex) (ompip) family"/>
</dbReference>
<dbReference type="TCDB" id="1.B.8.6.1">
    <property type="family name" value="the mitochondrial and plastid porin (mpp) family"/>
</dbReference>
<dbReference type="TCDB" id="9.A.58.1.1">
    <property type="family name" value="the maintenance of mitochondrial morphology (mmm) family"/>
</dbReference>
<dbReference type="PaxDb" id="4932-YAL010C"/>
<dbReference type="PeptideAtlas" id="P18409"/>
<dbReference type="EnsemblFungi" id="YAL010C_mRNA">
    <property type="protein sequence ID" value="YAL010C"/>
    <property type="gene ID" value="YAL010C"/>
</dbReference>
<dbReference type="GeneID" id="851223"/>
<dbReference type="KEGG" id="sce:YAL010C"/>
<dbReference type="AGR" id="SGD:S000000008"/>
<dbReference type="SGD" id="S000000008">
    <property type="gene designation" value="MDM10"/>
</dbReference>
<dbReference type="VEuPathDB" id="FungiDB:YAL010C"/>
<dbReference type="eggNOG" id="ENOG502QUN5">
    <property type="taxonomic scope" value="Eukaryota"/>
</dbReference>
<dbReference type="HOGENOM" id="CLU_026505_0_0_1"/>
<dbReference type="InParanoid" id="P18409"/>
<dbReference type="OMA" id="VPGYRQI"/>
<dbReference type="OrthoDB" id="2103793at2759"/>
<dbReference type="BioCyc" id="YEAST:G3O-28823-MONOMER"/>
<dbReference type="BioGRID-ORCS" id="851223">
    <property type="hits" value="2 hits in 10 CRISPR screens"/>
</dbReference>
<dbReference type="PRO" id="PR:P18409"/>
<dbReference type="Proteomes" id="UP000002311">
    <property type="component" value="Chromosome I"/>
</dbReference>
<dbReference type="RNAct" id="P18409">
    <property type="molecule type" value="protein"/>
</dbReference>
<dbReference type="GO" id="GO:0032865">
    <property type="term" value="C:ERMES complex"/>
    <property type="evidence" value="ECO:0000353"/>
    <property type="project" value="SGD"/>
</dbReference>
<dbReference type="GO" id="GO:0005741">
    <property type="term" value="C:mitochondrial outer membrane"/>
    <property type="evidence" value="ECO:0000314"/>
    <property type="project" value="SGD"/>
</dbReference>
<dbReference type="GO" id="GO:0098799">
    <property type="term" value="C:outer mitochondrial membrane protein complex"/>
    <property type="evidence" value="ECO:0000303"/>
    <property type="project" value="ComplexPortal"/>
</dbReference>
<dbReference type="GO" id="GO:0001401">
    <property type="term" value="C:SAM complex"/>
    <property type="evidence" value="ECO:0000353"/>
    <property type="project" value="SGD"/>
</dbReference>
<dbReference type="GO" id="GO:0051654">
    <property type="term" value="P:establishment of mitochondrion localization"/>
    <property type="evidence" value="ECO:0000315"/>
    <property type="project" value="SGD"/>
</dbReference>
<dbReference type="GO" id="GO:0000002">
    <property type="term" value="P:mitochondrial genome maintenance"/>
    <property type="evidence" value="ECO:0007669"/>
    <property type="project" value="UniProtKB-UniRule"/>
</dbReference>
<dbReference type="GO" id="GO:0070096">
    <property type="term" value="P:mitochondrial outer membrane translocase complex assembly"/>
    <property type="evidence" value="ECO:0000315"/>
    <property type="project" value="SGD"/>
</dbReference>
<dbReference type="GO" id="GO:0007005">
    <property type="term" value="P:mitochondrion organization"/>
    <property type="evidence" value="ECO:0000315"/>
    <property type="project" value="SGD"/>
</dbReference>
<dbReference type="GO" id="GO:1990456">
    <property type="term" value="P:mitochondrion-endoplasmic reticulum membrane tethering"/>
    <property type="evidence" value="ECO:0000315"/>
    <property type="project" value="SGD"/>
</dbReference>
<dbReference type="GO" id="GO:0007031">
    <property type="term" value="P:peroxisome organization"/>
    <property type="evidence" value="ECO:0000315"/>
    <property type="project" value="SGD"/>
</dbReference>
<dbReference type="GO" id="GO:0055091">
    <property type="term" value="P:phospholipid homeostasis"/>
    <property type="evidence" value="ECO:0000303"/>
    <property type="project" value="ComplexPortal"/>
</dbReference>
<dbReference type="GO" id="GO:0015914">
    <property type="term" value="P:phospholipid transport"/>
    <property type="evidence" value="ECO:0000316"/>
    <property type="project" value="SGD"/>
</dbReference>
<dbReference type="GO" id="GO:0045040">
    <property type="term" value="P:protein insertion into mitochondrial outer membrane"/>
    <property type="evidence" value="ECO:0000315"/>
    <property type="project" value="SGD"/>
</dbReference>
<dbReference type="HAMAP" id="MF_03102">
    <property type="entry name" value="Mdm10"/>
    <property type="match status" value="1"/>
</dbReference>
<dbReference type="InterPro" id="IPR027539">
    <property type="entry name" value="Mdm10"/>
</dbReference>
<dbReference type="PANTHER" id="PTHR28035">
    <property type="entry name" value="MITOCHONDRIAL DISTRIBUTION AND MORPHOLOGY PROTEIN 10"/>
    <property type="match status" value="1"/>
</dbReference>
<dbReference type="PANTHER" id="PTHR28035:SF1">
    <property type="entry name" value="MITOCHONDRIAL DISTRIBUTION AND MORPHOLOGY PROTEIN 10"/>
    <property type="match status" value="1"/>
</dbReference>
<dbReference type="Pfam" id="PF12519">
    <property type="entry name" value="MDM10"/>
    <property type="match status" value="1"/>
</dbReference>
<protein>
    <recommendedName>
        <fullName evidence="1">Mitochondrial distribution and morphology protein 10</fullName>
    </recommendedName>
    <alternativeName>
        <fullName evidence="1">Mitochondrial inheritance component MDM10</fullName>
    </alternativeName>
</protein>
<comment type="function">
    <text evidence="1 2 6 8 9 10 11 12">Component of the ERMES/MDM complex, which serves as a molecular tether to connect the endoplasmic reticulum and mitochondria. Components of this complex are involved in the control of mitochondrial shape and protein biogenesis and may function in phospholipid exchange. MDM10 is involved in the late assembly steps of the general translocase of the mitochondrial outer membrane (TOM complex). Functions in the TOM40-specific route of the assembly of outer membrane beta-barrel proteins, including the association of TOM40 with the receptor TOM22 and small TOM proteins. Can associate with the SAM(core) complex as well as the MDM12-MMM1 complex, both involved in late steps of the major beta-barrel assembly pathway, that is responsible for biogenesis of all outer membrane beta-barrel proteins. May act as a switch that shuttles between both complexes and channels precursor proteins into the TOM40-specific pathway. Plays a role in mitochondrial morphology and in the inheritance of mitochondria.</text>
</comment>
<comment type="subunit">
    <text evidence="1 3 6 9 10">Component of the ER-mitochondria encounter structure (ERMES) or MDM complex, composed of MMM1, MDM10, MDM12 and MDM34. Associates with the mitochondrial outer membrane sorting assembly machinery SAM(core) complex, which consists of SAM35, SAM37 and SAM50, to form a SAM(holo) complex.</text>
</comment>
<comment type="interaction">
    <interactant intactId="EBI-10580">
        <id>P18409</id>
    </interactant>
    <interactant intactId="EBI-10584">
        <id>Q92328</id>
        <label>MDM12</label>
    </interactant>
    <organismsDiffer>false</organismsDiffer>
    <experiments>4</experiments>
</comment>
<comment type="interaction">
    <interactant intactId="EBI-10580">
        <id>P18409</id>
    </interactant>
    <interactant intactId="EBI-24602">
        <id>P14693</id>
        <label>SAM35</label>
    </interactant>
    <organismsDiffer>false</organismsDiffer>
    <experiments>6</experiments>
</comment>
<comment type="interaction">
    <interactant intactId="EBI-10580">
        <id>P18409</id>
    </interactant>
    <interactant intactId="EBI-28646">
        <id>P53969</id>
        <label>SAM50</label>
    </interactant>
    <organismsDiffer>false</organismsDiffer>
    <experiments>4</experiments>
</comment>
<comment type="subcellular location">
    <subcellularLocation>
        <location evidence="1 3 4 7 10 11">Mitochondrion outer membrane</location>
        <topology evidence="1 3 4 7 10 11">Multi-pass membrane protein</topology>
    </subcellularLocation>
    <text>The ERMES/MDM complex localizes to a few discrete foci (around 10 per single cell), that represent mitochondria-endoplasmic reticulum junctions. These foci are often found next to mtDNA nucleoids.</text>
</comment>
<comment type="domain">
    <text>Lacks alpha-helical transmembrane segments, suggesting that it resides in the membrane via beta-sheet conformations similar to those predicted for other outer membrane proteins and porin.</text>
</comment>
<comment type="miscellaneous">
    <text evidence="5">Present with 768 molecules/cell in log phase SD medium.</text>
</comment>
<comment type="similarity">
    <text evidence="1">Belongs to the MDM10 family.</text>
</comment>
<accession>P18409</accession>
<accession>D6VPK8</accession>
<feature type="chain" id="PRO_0000096327" description="Mitochondrial distribution and morphology protein 10">
    <location>
        <begin position="1"/>
        <end position="493"/>
    </location>
</feature>
<feature type="sequence conflict" description="In Ref. 2; no nucleotide entry, 3; AAC04948 and 6; AAC04947." evidence="13" ref="2 3 6">
    <original>N</original>
    <variation>Q</variation>
    <location>
        <position position="272"/>
    </location>
</feature>
<reference key="1">
    <citation type="journal article" date="1994" name="J. Cell Biol.">
        <title>Regulation of mitochondrial morphology and inheritance by Mdm10p, a protein of the mitochondrial outer membrane.</title>
        <authorList>
            <person name="Sogo L.F."/>
            <person name="Yaffe M.P."/>
        </authorList>
    </citation>
    <scope>NUCLEOTIDE SEQUENCE [GENOMIC DNA]</scope>
    <scope>FUNCTION</scope>
    <scope>SUBCELLULAR LOCATION</scope>
    <source>
        <strain>MYY290</strain>
    </source>
</reference>
<reference key="2">
    <citation type="journal article" date="1994" name="Yeast">
        <title>Sequencing of chromosome I of Saccharomyces cerevisiae: analysis of the 42 kbp SPO7-CENI-CDC15 region.</title>
        <authorList>
            <person name="Clark M.W."/>
            <person name="Keng T."/>
            <person name="Storms R.K."/>
            <person name="Zhong W.-W."/>
            <person name="Fortin N."/>
            <person name="Zeng B."/>
            <person name="Delaney S."/>
            <person name="Ouellette B.F.F."/>
            <person name="Barton A.B."/>
            <person name="Kaback D.B."/>
            <person name="Bussey H."/>
        </authorList>
    </citation>
    <scope>NUCLEOTIDE SEQUENCE [GENOMIC DNA]</scope>
    <source>
        <strain>ATCC 204511 / S288c / AB972</strain>
    </source>
</reference>
<reference key="3">
    <citation type="journal article" date="1995" name="Proc. Natl. Acad. Sci. U.S.A.">
        <title>The nucleotide sequence of chromosome I from Saccharomyces cerevisiae.</title>
        <authorList>
            <person name="Bussey H."/>
            <person name="Kaback D.B."/>
            <person name="Zhong W.-W."/>
            <person name="Vo D.H."/>
            <person name="Clark M.W."/>
            <person name="Fortin N."/>
            <person name="Hall J."/>
            <person name="Ouellette B.F.F."/>
            <person name="Keng T."/>
            <person name="Barton A.B."/>
            <person name="Su Y."/>
            <person name="Davies C.J."/>
            <person name="Storms R.K."/>
        </authorList>
    </citation>
    <scope>NUCLEOTIDE SEQUENCE [LARGE SCALE GENOMIC DNA]</scope>
    <source>
        <strain>ATCC 204508 / S288c</strain>
    </source>
</reference>
<reference key="4">
    <citation type="journal article" date="2014" name="G3 (Bethesda)">
        <title>The reference genome sequence of Saccharomyces cerevisiae: Then and now.</title>
        <authorList>
            <person name="Engel S.R."/>
            <person name="Dietrich F.S."/>
            <person name="Fisk D.G."/>
            <person name="Binkley G."/>
            <person name="Balakrishnan R."/>
            <person name="Costanzo M.C."/>
            <person name="Dwight S.S."/>
            <person name="Hitz B.C."/>
            <person name="Karra K."/>
            <person name="Nash R.S."/>
            <person name="Weng S."/>
            <person name="Wong E.D."/>
            <person name="Lloyd P."/>
            <person name="Skrzypek M.S."/>
            <person name="Miyasato S.R."/>
            <person name="Simison M."/>
            <person name="Cherry J.M."/>
        </authorList>
    </citation>
    <scope>GENOME REANNOTATION</scope>
    <scope>SEQUENCE REVISION TO 272</scope>
    <source>
        <strain>ATCC 204508 / S288c</strain>
    </source>
</reference>
<reference key="5">
    <citation type="journal article" date="1990" name="Gene">
        <title>Molecular cloning of chromosome I DNA from Saccharomyces cerevisiae: isolation, characterization and regulation of the SPO7 sporulation gene.</title>
        <authorList>
            <person name="Whyte W."/>
            <person name="Koepp L.H."/>
            <person name="Lamb J."/>
            <person name="Crowley J.C."/>
            <person name="Kaback D.B."/>
        </authorList>
    </citation>
    <scope>NUCLEOTIDE SEQUENCE [GENOMIC DNA] OF 1-125</scope>
</reference>
<reference key="6">
    <citation type="journal article" date="1993" name="Genome">
        <title>Sequencing of chromosome I from Saccharomyces cerevisiae: analysis of a 32 kb region between the LTE1 and SPO7 genes.</title>
        <authorList>
            <person name="Ouellette B.F.F."/>
            <person name="Clark M.W."/>
            <person name="Keng T."/>
            <person name="Storms R.K."/>
            <person name="Zhong W.-W."/>
            <person name="Zeng B."/>
            <person name="Fortin N."/>
            <person name="Delaney S."/>
            <person name="Barton A.B."/>
            <person name="Kaback D.B."/>
            <person name="Bussey H."/>
        </authorList>
    </citation>
    <scope>NUCLEOTIDE SEQUENCE [GENOMIC DNA] OF 39-493</scope>
    <source>
        <strain>ATCC 204511 / S288c / AB972</strain>
    </source>
</reference>
<reference key="7">
    <citation type="journal article" date="1998" name="J. Cell Biol.">
        <title>Interaction between mitochondria and the actin cytoskeleton in budding yeast requires two integral mitochondrial outer membrane proteins, Mmm1p and Mdm10p.</title>
        <authorList>
            <person name="Boldogh I.R."/>
            <person name="Vojtov N."/>
            <person name="Karmon S."/>
            <person name="Pon L.A."/>
        </authorList>
    </citation>
    <scope>FUNCTION</scope>
</reference>
<reference key="8">
    <citation type="journal article" date="2002" name="Genetics">
        <title>Maintenance of mitochondrial morphology is linked to maintenance of the mitochondrial genome in Saccharomyces cerevisiae.</title>
        <authorList>
            <person name="Hanekamp T."/>
            <person name="Thorsness M.K."/>
            <person name="Rebbapragada I."/>
            <person name="Fisher E.M."/>
            <person name="Seebart C."/>
            <person name="Darland M.R."/>
            <person name="Coxbill J.A."/>
            <person name="Updike D.L."/>
            <person name="Thorsness P.E."/>
        </authorList>
    </citation>
    <scope>FUNCTION</scope>
</reference>
<reference key="9">
    <citation type="journal article" date="2003" name="Mol. Biol. Cell">
        <title>A protein complex containing Mdm10p, Mdm12p, and Mmm1p links mitochondrial membranes and DNA to the cytoskeleton-based segregation machinery.</title>
        <authorList>
            <person name="Boldogh I.R."/>
            <person name="Nowakowski D.W."/>
            <person name="Yang H.-C."/>
            <person name="Chung H."/>
            <person name="Karmon S."/>
            <person name="Royes P."/>
            <person name="Pon L.A."/>
        </authorList>
    </citation>
    <scope>IDENTIFICATION IN THE MDM10/MDM12/MMM1 COMPLEX</scope>
    <scope>SUBCELLULAR LOCATION</scope>
</reference>
<reference key="10">
    <citation type="journal article" date="2003" name="Nature">
        <title>Machinery for protein sorting and assembly in the mitochondrial outer membrane.</title>
        <authorList>
            <person name="Wiedemann N."/>
            <person name="Kozjak V."/>
            <person name="Chacinska A."/>
            <person name="Schoenfisch B."/>
            <person name="Rospert S."/>
            <person name="Ryan M.T."/>
            <person name="Pfanner N."/>
            <person name="Meisinger C."/>
        </authorList>
    </citation>
    <scope>PROBABLE BETA-BARREL TOPOLOGY</scope>
</reference>
<reference key="11">
    <citation type="journal article" date="2003" name="Nature">
        <title>Global analysis of protein localization in budding yeast.</title>
        <authorList>
            <person name="Huh W.-K."/>
            <person name="Falvo J.V."/>
            <person name="Gerke L.C."/>
            <person name="Carroll A.S."/>
            <person name="Howson R.W."/>
            <person name="Weissman J.S."/>
            <person name="O'Shea E.K."/>
        </authorList>
    </citation>
    <scope>SUBCELLULAR LOCATION [LARGE SCALE ANALYSIS]</scope>
</reference>
<reference key="12">
    <citation type="journal article" date="2003" name="Nature">
        <title>Global analysis of protein expression in yeast.</title>
        <authorList>
            <person name="Ghaemmaghami S."/>
            <person name="Huh W.-K."/>
            <person name="Bower K."/>
            <person name="Howson R.W."/>
            <person name="Belle A."/>
            <person name="Dephoure N."/>
            <person name="O'Shea E.K."/>
            <person name="Weissman J.S."/>
        </authorList>
    </citation>
    <scope>LEVEL OF PROTEIN EXPRESSION [LARGE SCALE ANALYSIS]</scope>
</reference>
<reference key="13">
    <citation type="journal article" date="2003" name="Nature">
        <title>Evolutionary conservation of biogenesis of beta-barrel membrane proteins.</title>
        <authorList>
            <person name="Paschen S.A."/>
            <person name="Waizenegger T."/>
            <person name="Stan T."/>
            <person name="Preuss M."/>
            <person name="Cyrklaff M."/>
            <person name="Hell K."/>
            <person name="Rapaport D."/>
            <person name="Neupert W."/>
        </authorList>
    </citation>
    <scope>PROBABLE TOPOLOGY BETA-BARREL</scope>
</reference>
<reference key="14">
    <citation type="journal article" date="2004" name="Dev. Cell">
        <title>The mitochondrial morphology protein Mdm10 functions in assembly of the preprotein translocase of the outer membrane.</title>
        <authorList>
            <person name="Meisinger C."/>
            <person name="Rissler M."/>
            <person name="Chacinska A."/>
            <person name="Szklarz L.K."/>
            <person name="Milenkovic D."/>
            <person name="Kozjak V."/>
            <person name="Schonfisch B."/>
            <person name="Lohaus C."/>
            <person name="Meyer H.E."/>
            <person name="Yaffe M.P."/>
            <person name="Guiard B."/>
            <person name="Wiedemann N."/>
            <person name="Pfanner N."/>
        </authorList>
    </citation>
    <scope>FUNCTION</scope>
    <scope>IDENTIFICATION IN SAM COMPLEX</scope>
</reference>
<reference key="15">
    <citation type="journal article" date="2006" name="J. Biol. Chem.">
        <title>Mitochondrial protein sorting: differentiation of beta-barrel assembly by Tom7-mediated segregation of Mdm10.</title>
        <authorList>
            <person name="Meisinger C."/>
            <person name="Wiedemann N."/>
            <person name="Rissler M."/>
            <person name="Strub A."/>
            <person name="Milenkovic D."/>
            <person name="Schoenfisch B."/>
            <person name="Mueller H."/>
            <person name="Kozjak V."/>
            <person name="Pfanner N."/>
        </authorList>
    </citation>
    <scope>FUNCTION</scope>
</reference>
<reference key="16">
    <citation type="journal article" date="2006" name="Mol. Biol. Cell">
        <title>Proteomic analysis of the yeast mitochondrial outer membrane reveals accumulation of a subclass of preproteins.</title>
        <authorList>
            <person name="Zahedi R.P."/>
            <person name="Sickmann A."/>
            <person name="Boehm A.M."/>
            <person name="Winkler C."/>
            <person name="Zufall N."/>
            <person name="Schoenfisch B."/>
            <person name="Guiard B."/>
            <person name="Pfanner N."/>
            <person name="Meisinger C."/>
        </authorList>
    </citation>
    <scope>SUBCELLULAR LOCATION</scope>
    <scope>IDENTIFICATION BY MASS SPECTROMETRY</scope>
</reference>
<reference key="17">
    <citation type="journal article" date="2007" name="EMBO J.">
        <title>The morphology proteins Mdm12/Mmm1 function in the major beta-barrel assembly pathway of mitochondria.</title>
        <authorList>
            <person name="Meisinger C."/>
            <person name="Pfannschmidt S."/>
            <person name="Rissler M."/>
            <person name="Milenkovic D."/>
            <person name="Becker T."/>
            <person name="Stojanovski D."/>
            <person name="Youngman M.J."/>
            <person name="Jensen R.E."/>
            <person name="Chacinska A."/>
            <person name="Guiard B."/>
            <person name="Pfanner N."/>
            <person name="Wiedemann N."/>
        </authorList>
    </citation>
    <scope>FUNCTION</scope>
    <scope>IDENTIFICATION IN MDM10/MDM12/MMM1 AND SAM COMPLEXES</scope>
</reference>
<reference key="18">
    <citation type="journal article" date="2009" name="Science">
        <title>An ER-mitochondria tethering complex revealed by a synthetic biology screen.</title>
        <authorList>
            <person name="Kornmann B."/>
            <person name="Currie E."/>
            <person name="Collins S.R."/>
            <person name="Schuldiner M."/>
            <person name="Nunnari J."/>
            <person name="Weissman J.S."/>
            <person name="Walter P."/>
        </authorList>
    </citation>
    <scope>FUNCTION</scope>
    <scope>IDENTIFICATION IN ERMES/MDM COMPLEX</scope>
    <scope>SUBCELLULAR LOCATION</scope>
</reference>
<organism>
    <name type="scientific">Saccharomyces cerevisiae (strain ATCC 204508 / S288c)</name>
    <name type="common">Baker's yeast</name>
    <dbReference type="NCBI Taxonomy" id="559292"/>
    <lineage>
        <taxon>Eukaryota</taxon>
        <taxon>Fungi</taxon>
        <taxon>Dikarya</taxon>
        <taxon>Ascomycota</taxon>
        <taxon>Saccharomycotina</taxon>
        <taxon>Saccharomycetes</taxon>
        <taxon>Saccharomycetales</taxon>
        <taxon>Saccharomycetaceae</taxon>
        <taxon>Saccharomyces</taxon>
    </lineage>
</organism>
<proteinExistence type="evidence at protein level"/>
<keyword id="KW-0472">Membrane</keyword>
<keyword id="KW-0496">Mitochondrion</keyword>
<keyword id="KW-1000">Mitochondrion outer membrane</keyword>
<keyword id="KW-1185">Reference proteome</keyword>
<keyword id="KW-0812">Transmembrane</keyword>
<keyword id="KW-1134">Transmembrane beta strand</keyword>